<reference key="1">
    <citation type="journal article" date="2004" name="Nat. Genet.">
        <title>Comparison of genome degradation in Paratyphi A and Typhi, human-restricted serovars of Salmonella enterica that cause typhoid.</title>
        <authorList>
            <person name="McClelland M."/>
            <person name="Sanderson K.E."/>
            <person name="Clifton S.W."/>
            <person name="Latreille P."/>
            <person name="Porwollik S."/>
            <person name="Sabo A."/>
            <person name="Meyer R."/>
            <person name="Bieri T."/>
            <person name="Ozersky P."/>
            <person name="McLellan M."/>
            <person name="Harkins C.R."/>
            <person name="Wang C."/>
            <person name="Nguyen C."/>
            <person name="Berghoff A."/>
            <person name="Elliott G."/>
            <person name="Kohlberg S."/>
            <person name="Strong C."/>
            <person name="Du F."/>
            <person name="Carter J."/>
            <person name="Kremizki C."/>
            <person name="Layman D."/>
            <person name="Leonard S."/>
            <person name="Sun H."/>
            <person name="Fulton L."/>
            <person name="Nash W."/>
            <person name="Miner T."/>
            <person name="Minx P."/>
            <person name="Delehaunty K."/>
            <person name="Fronick C."/>
            <person name="Magrini V."/>
            <person name="Nhan M."/>
            <person name="Warren W."/>
            <person name="Florea L."/>
            <person name="Spieth J."/>
            <person name="Wilson R.K."/>
        </authorList>
    </citation>
    <scope>NUCLEOTIDE SEQUENCE [LARGE SCALE GENOMIC DNA]</scope>
    <source>
        <strain>ATCC 9150 / SARB42</strain>
    </source>
</reference>
<comment type="function">
    <text evidence="1">An aminoacyl-tRNA editing enzyme that deacylates mischarged D-aminoacyl-tRNAs. Also deacylates mischarged glycyl-tRNA(Ala), protecting cells against glycine mischarging by AlaRS. Acts via tRNA-based rather than protein-based catalysis; rejects L-amino acids rather than detecting D-amino acids in the active site. By recycling D-aminoacyl-tRNA to D-amino acids and free tRNA molecules, this enzyme counteracts the toxicity associated with the formation of D-aminoacyl-tRNA entities in vivo and helps enforce protein L-homochirality.</text>
</comment>
<comment type="catalytic activity">
    <reaction evidence="1">
        <text>glycyl-tRNA(Ala) + H2O = tRNA(Ala) + glycine + H(+)</text>
        <dbReference type="Rhea" id="RHEA:53744"/>
        <dbReference type="Rhea" id="RHEA-COMP:9657"/>
        <dbReference type="Rhea" id="RHEA-COMP:13640"/>
        <dbReference type="ChEBI" id="CHEBI:15377"/>
        <dbReference type="ChEBI" id="CHEBI:15378"/>
        <dbReference type="ChEBI" id="CHEBI:57305"/>
        <dbReference type="ChEBI" id="CHEBI:78442"/>
        <dbReference type="ChEBI" id="CHEBI:78522"/>
        <dbReference type="EC" id="3.1.1.96"/>
    </reaction>
</comment>
<comment type="catalytic activity">
    <reaction evidence="1">
        <text>a D-aminoacyl-tRNA + H2O = a tRNA + a D-alpha-amino acid + H(+)</text>
        <dbReference type="Rhea" id="RHEA:13953"/>
        <dbReference type="Rhea" id="RHEA-COMP:10123"/>
        <dbReference type="Rhea" id="RHEA-COMP:10124"/>
        <dbReference type="ChEBI" id="CHEBI:15377"/>
        <dbReference type="ChEBI" id="CHEBI:15378"/>
        <dbReference type="ChEBI" id="CHEBI:59871"/>
        <dbReference type="ChEBI" id="CHEBI:78442"/>
        <dbReference type="ChEBI" id="CHEBI:79333"/>
        <dbReference type="EC" id="3.1.1.96"/>
    </reaction>
</comment>
<comment type="subunit">
    <text evidence="1">Homodimer.</text>
</comment>
<comment type="subcellular location">
    <subcellularLocation>
        <location evidence="1">Cytoplasm</location>
    </subcellularLocation>
</comment>
<comment type="domain">
    <text evidence="1">A Gly-cisPro motif from one monomer fits into the active site of the other monomer to allow specific chiral rejection of L-amino acids.</text>
</comment>
<comment type="similarity">
    <text evidence="1">Belongs to the DTD family.</text>
</comment>
<name>DTD_SALPA</name>
<sequence length="145" mass="15926">MIALIQRVTRASVTVEDEVTGEIGPGLLVLLGVEKEDDEQKANRLCERVLGYRIFSDADGKMNLNVQQAGGSVLVVSQFTLAADTERGMRPSFSGGAAPDRAQALYEYFVERCRQQAINTQTGRFAADMQVELVNDGPVTFWLQV</sequence>
<proteinExistence type="inferred from homology"/>
<protein>
    <recommendedName>
        <fullName evidence="1">D-aminoacyl-tRNA deacylase</fullName>
        <shortName evidence="1">DTD</shortName>
        <ecNumber evidence="1">3.1.1.96</ecNumber>
    </recommendedName>
    <alternativeName>
        <fullName evidence="1">Gly-tRNA(Ala) deacylase</fullName>
    </alternativeName>
</protein>
<keyword id="KW-0963">Cytoplasm</keyword>
<keyword id="KW-0378">Hydrolase</keyword>
<keyword id="KW-0694">RNA-binding</keyword>
<keyword id="KW-0820">tRNA-binding</keyword>
<gene>
    <name evidence="1" type="primary">dtd</name>
    <name type="ordered locus">SPA3869</name>
</gene>
<feature type="chain" id="PRO_0000164579" description="D-aminoacyl-tRNA deacylase">
    <location>
        <begin position="1"/>
        <end position="145"/>
    </location>
</feature>
<feature type="short sequence motif" description="Gly-cisPro motif, important for rejection of L-amino acids" evidence="1">
    <location>
        <begin position="137"/>
        <end position="138"/>
    </location>
</feature>
<organism>
    <name type="scientific">Salmonella paratyphi A (strain ATCC 9150 / SARB42)</name>
    <dbReference type="NCBI Taxonomy" id="295319"/>
    <lineage>
        <taxon>Bacteria</taxon>
        <taxon>Pseudomonadati</taxon>
        <taxon>Pseudomonadota</taxon>
        <taxon>Gammaproteobacteria</taxon>
        <taxon>Enterobacterales</taxon>
        <taxon>Enterobacteriaceae</taxon>
        <taxon>Salmonella</taxon>
    </lineage>
</organism>
<accession>Q5PKE2</accession>
<dbReference type="EC" id="3.1.1.96" evidence="1"/>
<dbReference type="EMBL" id="CP000026">
    <property type="protein sequence ID" value="AAV79636.1"/>
    <property type="molecule type" value="Genomic_DNA"/>
</dbReference>
<dbReference type="RefSeq" id="WP_000560969.1">
    <property type="nucleotide sequence ID" value="NC_006511.1"/>
</dbReference>
<dbReference type="SMR" id="Q5PKE2"/>
<dbReference type="KEGG" id="spt:SPA3869"/>
<dbReference type="HOGENOM" id="CLU_076901_1_0_6"/>
<dbReference type="Proteomes" id="UP000008185">
    <property type="component" value="Chromosome"/>
</dbReference>
<dbReference type="GO" id="GO:0005737">
    <property type="term" value="C:cytoplasm"/>
    <property type="evidence" value="ECO:0007669"/>
    <property type="project" value="UniProtKB-SubCell"/>
</dbReference>
<dbReference type="GO" id="GO:0051500">
    <property type="term" value="F:D-tyrosyl-tRNA(Tyr) deacylase activity"/>
    <property type="evidence" value="ECO:0007669"/>
    <property type="project" value="TreeGrafter"/>
</dbReference>
<dbReference type="GO" id="GO:0106026">
    <property type="term" value="F:Gly-tRNA(Ala) deacylase activity"/>
    <property type="evidence" value="ECO:0007669"/>
    <property type="project" value="UniProtKB-UniRule"/>
</dbReference>
<dbReference type="GO" id="GO:0043908">
    <property type="term" value="F:Ser(Gly)-tRNA(Ala) hydrolase activity"/>
    <property type="evidence" value="ECO:0007669"/>
    <property type="project" value="UniProtKB-UniRule"/>
</dbReference>
<dbReference type="GO" id="GO:0000049">
    <property type="term" value="F:tRNA binding"/>
    <property type="evidence" value="ECO:0007669"/>
    <property type="project" value="UniProtKB-UniRule"/>
</dbReference>
<dbReference type="GO" id="GO:0019478">
    <property type="term" value="P:D-amino acid catabolic process"/>
    <property type="evidence" value="ECO:0007669"/>
    <property type="project" value="UniProtKB-UniRule"/>
</dbReference>
<dbReference type="CDD" id="cd00563">
    <property type="entry name" value="Dtyr_deacylase"/>
    <property type="match status" value="1"/>
</dbReference>
<dbReference type="FunFam" id="3.50.80.10:FF:000001">
    <property type="entry name" value="D-aminoacyl-tRNA deacylase"/>
    <property type="match status" value="1"/>
</dbReference>
<dbReference type="Gene3D" id="3.50.80.10">
    <property type="entry name" value="D-tyrosyl-tRNA(Tyr) deacylase"/>
    <property type="match status" value="1"/>
</dbReference>
<dbReference type="HAMAP" id="MF_00518">
    <property type="entry name" value="Deacylase_Dtd"/>
    <property type="match status" value="1"/>
</dbReference>
<dbReference type="InterPro" id="IPR003732">
    <property type="entry name" value="Daa-tRNA_deacyls_DTD"/>
</dbReference>
<dbReference type="InterPro" id="IPR023509">
    <property type="entry name" value="DTD-like_sf"/>
</dbReference>
<dbReference type="NCBIfam" id="TIGR00256">
    <property type="entry name" value="D-aminoacyl-tRNA deacylase"/>
    <property type="match status" value="1"/>
</dbReference>
<dbReference type="PANTHER" id="PTHR10472:SF5">
    <property type="entry name" value="D-AMINOACYL-TRNA DEACYLASE 1"/>
    <property type="match status" value="1"/>
</dbReference>
<dbReference type="PANTHER" id="PTHR10472">
    <property type="entry name" value="D-TYROSYL-TRNA TYR DEACYLASE"/>
    <property type="match status" value="1"/>
</dbReference>
<dbReference type="Pfam" id="PF02580">
    <property type="entry name" value="Tyr_Deacylase"/>
    <property type="match status" value="1"/>
</dbReference>
<dbReference type="SUPFAM" id="SSF69500">
    <property type="entry name" value="DTD-like"/>
    <property type="match status" value="1"/>
</dbReference>
<evidence type="ECO:0000255" key="1">
    <source>
        <dbReference type="HAMAP-Rule" id="MF_00518"/>
    </source>
</evidence>